<dbReference type="EC" id="3.4.21.42" evidence="1"/>
<dbReference type="EMBL" id="D88250">
    <property type="protein sequence ID" value="BAA25797.1"/>
    <property type="status" value="ALT_INIT"/>
    <property type="molecule type" value="mRNA"/>
</dbReference>
<dbReference type="EMBL" id="BC062042">
    <property type="protein sequence ID" value="AAH62042.1"/>
    <property type="status" value="ALT_INIT"/>
    <property type="molecule type" value="mRNA"/>
</dbReference>
<dbReference type="PIR" id="JC6554">
    <property type="entry name" value="JC6554"/>
</dbReference>
<dbReference type="RefSeq" id="NP_620255.1">
    <property type="nucleotide sequence ID" value="NM_138900.1"/>
</dbReference>
<dbReference type="SMR" id="Q6P6T1"/>
<dbReference type="FunCoup" id="Q6P6T1">
    <property type="interactions" value="31"/>
</dbReference>
<dbReference type="STRING" id="10116.ENSRNOP00000016330"/>
<dbReference type="MEROPS" id="S01.193"/>
<dbReference type="MEROPS" id="S01.210"/>
<dbReference type="GlyCosmos" id="Q6P6T1">
    <property type="glycosylation" value="2 sites, No reported glycans"/>
</dbReference>
<dbReference type="GlyGen" id="Q6P6T1">
    <property type="glycosylation" value="3 sites"/>
</dbReference>
<dbReference type="iPTMnet" id="Q6P6T1"/>
<dbReference type="PhosphoSitePlus" id="Q6P6T1"/>
<dbReference type="PaxDb" id="10116-ENSRNOP00000016330"/>
<dbReference type="PeptideAtlas" id="Q6P6T1"/>
<dbReference type="GeneID" id="192262"/>
<dbReference type="KEGG" id="rno:192262"/>
<dbReference type="UCSC" id="RGD:619983">
    <property type="organism name" value="rat"/>
</dbReference>
<dbReference type="AGR" id="RGD:619983"/>
<dbReference type="CTD" id="716"/>
<dbReference type="RGD" id="619983">
    <property type="gene designation" value="C1s"/>
</dbReference>
<dbReference type="eggNOG" id="KOG3627">
    <property type="taxonomic scope" value="Eukaryota"/>
</dbReference>
<dbReference type="InParanoid" id="Q6P6T1"/>
<dbReference type="PhylomeDB" id="Q6P6T1"/>
<dbReference type="Reactome" id="R-RNO-166663">
    <property type="pathway name" value="Initial triggering of complement"/>
</dbReference>
<dbReference type="Reactome" id="R-RNO-173623">
    <property type="pathway name" value="Classical antibody-mediated complement activation"/>
</dbReference>
<dbReference type="Reactome" id="R-RNO-977606">
    <property type="pathway name" value="Regulation of Complement cascade"/>
</dbReference>
<dbReference type="PRO" id="PR:Q6P6T1"/>
<dbReference type="Proteomes" id="UP000002494">
    <property type="component" value="Unplaced"/>
</dbReference>
<dbReference type="GO" id="GO:0005576">
    <property type="term" value="C:extracellular region"/>
    <property type="evidence" value="ECO:0000314"/>
    <property type="project" value="RGD"/>
</dbReference>
<dbReference type="GO" id="GO:0005615">
    <property type="term" value="C:extracellular space"/>
    <property type="evidence" value="ECO:0000318"/>
    <property type="project" value="GO_Central"/>
</dbReference>
<dbReference type="GO" id="GO:0005509">
    <property type="term" value="F:calcium ion binding"/>
    <property type="evidence" value="ECO:0007669"/>
    <property type="project" value="InterPro"/>
</dbReference>
<dbReference type="GO" id="GO:0042802">
    <property type="term" value="F:identical protein binding"/>
    <property type="evidence" value="ECO:0000266"/>
    <property type="project" value="RGD"/>
</dbReference>
<dbReference type="GO" id="GO:0004252">
    <property type="term" value="F:serine-type endopeptidase activity"/>
    <property type="evidence" value="ECO:0000266"/>
    <property type="project" value="RGD"/>
</dbReference>
<dbReference type="GO" id="GO:0006958">
    <property type="term" value="P:complement activation, classical pathway"/>
    <property type="evidence" value="ECO:0007669"/>
    <property type="project" value="UniProtKB-KW"/>
</dbReference>
<dbReference type="GO" id="GO:0010001">
    <property type="term" value="P:glial cell differentiation"/>
    <property type="evidence" value="ECO:0000270"/>
    <property type="project" value="RGD"/>
</dbReference>
<dbReference type="GO" id="GO:0045087">
    <property type="term" value="P:innate immune response"/>
    <property type="evidence" value="ECO:0007669"/>
    <property type="project" value="UniProtKB-KW"/>
</dbReference>
<dbReference type="GO" id="GO:0006508">
    <property type="term" value="P:proteolysis"/>
    <property type="evidence" value="ECO:0007669"/>
    <property type="project" value="UniProtKB-KW"/>
</dbReference>
<dbReference type="GO" id="GO:0051591">
    <property type="term" value="P:response to cAMP"/>
    <property type="evidence" value="ECO:0000270"/>
    <property type="project" value="RGD"/>
</dbReference>
<dbReference type="CDD" id="cd00033">
    <property type="entry name" value="CCP"/>
    <property type="match status" value="2"/>
</dbReference>
<dbReference type="CDD" id="cd00041">
    <property type="entry name" value="CUB"/>
    <property type="match status" value="2"/>
</dbReference>
<dbReference type="CDD" id="cd00054">
    <property type="entry name" value="EGF_CA"/>
    <property type="match status" value="1"/>
</dbReference>
<dbReference type="CDD" id="cd00190">
    <property type="entry name" value="Tryp_SPc"/>
    <property type="match status" value="1"/>
</dbReference>
<dbReference type="FunFam" id="2.10.70.10:FF:000049">
    <property type="entry name" value="Complement C1s subcomponent"/>
    <property type="match status" value="1"/>
</dbReference>
<dbReference type="FunFam" id="2.40.10.10:FF:000059">
    <property type="entry name" value="Complement C1s subcomponent"/>
    <property type="match status" value="1"/>
</dbReference>
<dbReference type="FunFam" id="2.40.10.10:FF:000067">
    <property type="entry name" value="Complement C1s subcomponent"/>
    <property type="match status" value="1"/>
</dbReference>
<dbReference type="FunFam" id="2.60.120.290:FF:000034">
    <property type="entry name" value="complement C1s subcomponent"/>
    <property type="match status" value="1"/>
</dbReference>
<dbReference type="FunFam" id="2.10.25.10:FF:000059">
    <property type="entry name" value="Mannan-binding lectin serine protease 1"/>
    <property type="match status" value="1"/>
</dbReference>
<dbReference type="FunFam" id="2.10.70.10:FF:000016">
    <property type="entry name" value="Mannan-binding lectin serine protease 1"/>
    <property type="match status" value="1"/>
</dbReference>
<dbReference type="FunFam" id="2.60.120.290:FF:000006">
    <property type="entry name" value="Mannan-binding lectin serine protease 1"/>
    <property type="match status" value="1"/>
</dbReference>
<dbReference type="Gene3D" id="2.10.70.10">
    <property type="entry name" value="Complement Module, domain 1"/>
    <property type="match status" value="2"/>
</dbReference>
<dbReference type="Gene3D" id="2.10.25.10">
    <property type="entry name" value="Laminin"/>
    <property type="match status" value="1"/>
</dbReference>
<dbReference type="Gene3D" id="2.60.120.290">
    <property type="entry name" value="Spermadhesin, CUB domain"/>
    <property type="match status" value="2"/>
</dbReference>
<dbReference type="Gene3D" id="2.40.10.10">
    <property type="entry name" value="Trypsin-like serine proteases"/>
    <property type="match status" value="2"/>
</dbReference>
<dbReference type="InterPro" id="IPR000859">
    <property type="entry name" value="CUB_dom"/>
</dbReference>
<dbReference type="InterPro" id="IPR001881">
    <property type="entry name" value="EGF-like_Ca-bd_dom"/>
</dbReference>
<dbReference type="InterPro" id="IPR018097">
    <property type="entry name" value="EGF_Ca-bd_CS"/>
</dbReference>
<dbReference type="InterPro" id="IPR024175">
    <property type="entry name" value="Pept_S1A_C1r/C1S/mannan-bd"/>
</dbReference>
<dbReference type="InterPro" id="IPR009003">
    <property type="entry name" value="Peptidase_S1_PA"/>
</dbReference>
<dbReference type="InterPro" id="IPR043504">
    <property type="entry name" value="Peptidase_S1_PA_chymotrypsin"/>
</dbReference>
<dbReference type="InterPro" id="IPR001314">
    <property type="entry name" value="Peptidase_S1A"/>
</dbReference>
<dbReference type="InterPro" id="IPR035914">
    <property type="entry name" value="Sperma_CUB_dom_sf"/>
</dbReference>
<dbReference type="InterPro" id="IPR035976">
    <property type="entry name" value="Sushi/SCR/CCP_sf"/>
</dbReference>
<dbReference type="InterPro" id="IPR000436">
    <property type="entry name" value="Sushi_SCR_CCP_dom"/>
</dbReference>
<dbReference type="InterPro" id="IPR001254">
    <property type="entry name" value="Trypsin_dom"/>
</dbReference>
<dbReference type="InterPro" id="IPR033116">
    <property type="entry name" value="TRYPSIN_SER"/>
</dbReference>
<dbReference type="PANTHER" id="PTHR24255:SF18">
    <property type="entry name" value="COMPLEMENT C1S SUBCOMPONENT"/>
    <property type="match status" value="1"/>
</dbReference>
<dbReference type="PANTHER" id="PTHR24255">
    <property type="entry name" value="COMPLEMENT COMPONENT 1, S SUBCOMPONENT-RELATED"/>
    <property type="match status" value="1"/>
</dbReference>
<dbReference type="Pfam" id="PF00431">
    <property type="entry name" value="CUB"/>
    <property type="match status" value="2"/>
</dbReference>
<dbReference type="Pfam" id="PF14670">
    <property type="entry name" value="FXa_inhibition"/>
    <property type="match status" value="1"/>
</dbReference>
<dbReference type="Pfam" id="PF00084">
    <property type="entry name" value="Sushi"/>
    <property type="match status" value="2"/>
</dbReference>
<dbReference type="Pfam" id="PF00089">
    <property type="entry name" value="Trypsin"/>
    <property type="match status" value="1"/>
</dbReference>
<dbReference type="PIRSF" id="PIRSF001155">
    <property type="entry name" value="C1r_C1s_MASP"/>
    <property type="match status" value="1"/>
</dbReference>
<dbReference type="PRINTS" id="PR00722">
    <property type="entry name" value="CHYMOTRYPSIN"/>
</dbReference>
<dbReference type="SMART" id="SM00032">
    <property type="entry name" value="CCP"/>
    <property type="match status" value="2"/>
</dbReference>
<dbReference type="SMART" id="SM00042">
    <property type="entry name" value="CUB"/>
    <property type="match status" value="2"/>
</dbReference>
<dbReference type="SMART" id="SM00179">
    <property type="entry name" value="EGF_CA"/>
    <property type="match status" value="1"/>
</dbReference>
<dbReference type="SMART" id="SM00020">
    <property type="entry name" value="Tryp_SPc"/>
    <property type="match status" value="1"/>
</dbReference>
<dbReference type="SUPFAM" id="SSF57535">
    <property type="entry name" value="Complement control module/SCR domain"/>
    <property type="match status" value="2"/>
</dbReference>
<dbReference type="SUPFAM" id="SSF57196">
    <property type="entry name" value="EGF/Laminin"/>
    <property type="match status" value="1"/>
</dbReference>
<dbReference type="SUPFAM" id="SSF49854">
    <property type="entry name" value="Spermadhesin, CUB domain"/>
    <property type="match status" value="2"/>
</dbReference>
<dbReference type="SUPFAM" id="SSF50494">
    <property type="entry name" value="Trypsin-like serine proteases"/>
    <property type="match status" value="1"/>
</dbReference>
<dbReference type="PROSITE" id="PS00010">
    <property type="entry name" value="ASX_HYDROXYL"/>
    <property type="match status" value="1"/>
</dbReference>
<dbReference type="PROSITE" id="PS01180">
    <property type="entry name" value="CUB"/>
    <property type="match status" value="2"/>
</dbReference>
<dbReference type="PROSITE" id="PS01187">
    <property type="entry name" value="EGF_CA"/>
    <property type="match status" value="1"/>
</dbReference>
<dbReference type="PROSITE" id="PS50923">
    <property type="entry name" value="SUSHI"/>
    <property type="match status" value="2"/>
</dbReference>
<dbReference type="PROSITE" id="PS50240">
    <property type="entry name" value="TRYPSIN_DOM"/>
    <property type="match status" value="1"/>
</dbReference>
<dbReference type="PROSITE" id="PS00135">
    <property type="entry name" value="TRYPSIN_SER"/>
    <property type="match status" value="1"/>
</dbReference>
<organism>
    <name type="scientific">Rattus norvegicus</name>
    <name type="common">Rat</name>
    <dbReference type="NCBI Taxonomy" id="10116"/>
    <lineage>
        <taxon>Eukaryota</taxon>
        <taxon>Metazoa</taxon>
        <taxon>Chordata</taxon>
        <taxon>Craniata</taxon>
        <taxon>Vertebrata</taxon>
        <taxon>Euteleostomi</taxon>
        <taxon>Mammalia</taxon>
        <taxon>Eutheria</taxon>
        <taxon>Euarchontoglires</taxon>
        <taxon>Glires</taxon>
        <taxon>Rodentia</taxon>
        <taxon>Myomorpha</taxon>
        <taxon>Muroidea</taxon>
        <taxon>Muridae</taxon>
        <taxon>Murinae</taxon>
        <taxon>Rattus</taxon>
    </lineage>
</organism>
<sequence>MWCFVFFSLLASFSAEPTMYGEILSPNYPQAYPNEVVKTWDIEVPEGFGIHLYFTHLDMELSENCAYDSVQIISGGIEEERLCGQRTSKSPNSPTVEEFQFPYNRLQVVFTSDFSNEERFTGFAAYYSAVDVNECTDFTDVPCSHFCNNFIGGYFCSCPPEYFLHDDMRTCGVNCSGDVFTALIGEIASPNYPNPYPENSRCEYQIRLQEGFRLVLTIRREDFDVEPADSEGNCHDSLTFAAKNQQFGPYCGNGFPGPLTIKTQSNTLDIVFQTDLTGQNKGWKLRYHGDPIPCPKEISANSIWEPEKAKYVFKDVVKITCVDGFEVVEGNVGSTSFYSTCQSNGQWSNSRLECQPVDCGVPEPIENGKVEDPEDTVFGSVIHYTCEEPYYYMEQEEGGEYHCAANGSWVNDQLGVELPKCIPVCGVPTEPFKVQQRIFGGYSTKIQSFPWQVYFESPRGGGALIDEYWVLTAAHVVEGNSDPVMYVGSTLLKIERLRNAQRLITERVIIHPSWKQEDDLNTRTNFDNDIALVQLKDPVKMGPTVAPICLPETSSDYNPSEGDLGLISGWGRTENRTNVIQLRGAKLPITSLEKCQQVKVENPKARSNDYVFTDNMICAGEKGVDSCEGDSGGAFALPVPNVKDPKFYVAGLVSWGKKCGTYGIYTKVKNYVDWILKTMQENSGPKKD</sequence>
<comment type="function">
    <text evidence="1">Component of the complement C1 complex, a multiprotein complex that initiates the classical pathway of the complement system, a cascade of proteins that leads to phagocytosis and breakdown of pathogens and signaling that strengthens the adaptive immune system. C1S is activated following association of the C1 complex with immunoglobulins (IgG or IgM) complexed with antigens to form antigen-antibody complexes on the surface of pathogens. C1S is cleaved and activated by C1R to generate C1s subcomponent heavy and light chains. C1s subcomponent light chain then cleaves and activates C2 and C4, the next components of the classical complement pathway.</text>
</comment>
<comment type="function">
    <molecule>Complement C1s subcomponent light chain</molecule>
    <text evidence="1">Serine protease component of the complement C1 complex, which catalyzes cleavage and activation of C2 and C4, the next components of the classical complement pathway. Also cleaves IGFBP5 and thereby inhibits the trophic effects of IGF1.</text>
</comment>
<comment type="catalytic activity">
    <molecule>Complement C1s subcomponent light chain</molecule>
    <reaction evidence="1">
        <text>Cleavage of Arg-|-Ala bond in complement component C4 to form C4a and C4b, and Lys(or Arg)-|-Lys bond in complement component C2 to form C2a and C2b: the 'classical' pathway C3 convertase.</text>
        <dbReference type="EC" id="3.4.21.42"/>
    </reaction>
</comment>
<comment type="activity regulation">
    <text evidence="1">Cleaved and activated by C1R. Immunoglobulin-binding promotes autoactivation of C1R, which results in the cleavage of the Arg-Ile bond in the catalytic domain. Inhibited by C1 inhibitor (SERPING1).</text>
</comment>
<comment type="subunit">
    <text evidence="1">Core component of the complement C1 complex, a calcium-dependent complex composed of 1 molecule of the C1Q subcomplex, 2 molecules of C1R and 2 molecules of C1S. The C1Q subcomplex is composed 18 subunits: 3 chains of C1QA, C1QB, and C1QC trimerize to form 6 collagen-like triple helices connected to six globular ligand-recognition modules.</text>
</comment>
<comment type="subcellular location">
    <subcellularLocation>
        <location evidence="1">Secreted</location>
    </subcellularLocation>
    <subcellularLocation>
        <location evidence="1">Cell surface</location>
    </subcellularLocation>
    <text evidence="1">Recruited to the surface of pathogens by the C1Q subcomplex.</text>
</comment>
<comment type="PTM">
    <text evidence="1">Cleaved and activated by C1R to generate Complement C1s subcomponent heavy and light chains.</text>
</comment>
<comment type="PTM">
    <text evidence="1">The iron and 2-oxoglutarate dependent 3-hydroxylation of aspartate and asparagine is (R) stereospecific within EGF domains.</text>
</comment>
<comment type="similarity">
    <text evidence="4">Belongs to the peptidase S1 family.</text>
</comment>
<comment type="sequence caution" evidence="7">
    <conflict type="erroneous initiation">
        <sequence resource="EMBL-CDS" id="AAH62042"/>
    </conflict>
    <text>Extended N-terminus.</text>
</comment>
<comment type="sequence caution" evidence="7">
    <conflict type="erroneous initiation">
        <sequence resource="EMBL-CDS" id="BAA25797"/>
    </conflict>
    <text>Extended N-terminus.</text>
</comment>
<name>C1S_RAT</name>
<protein>
    <recommendedName>
        <fullName>Complement C1s subcomponent</fullName>
        <ecNumber evidence="1">3.4.21.42</ecNumber>
    </recommendedName>
    <alternativeName>
        <fullName>C1 esterase</fullName>
    </alternativeName>
    <alternativeName>
        <fullName>Complement component 1 subcomponent s</fullName>
    </alternativeName>
    <component>
        <recommendedName>
            <fullName>Complement C1s subcomponent heavy chain</fullName>
        </recommendedName>
    </component>
    <component>
        <recommendedName>
            <fullName>Complement C1s subcomponent light chain</fullName>
        </recommendedName>
    </component>
</protein>
<feature type="signal peptide" evidence="1">
    <location>
        <begin position="1"/>
        <end position="15"/>
    </location>
</feature>
<feature type="chain" id="PRO_0000042202" description="Complement C1s subcomponent">
    <location>
        <begin position="16"/>
        <end position="688"/>
    </location>
</feature>
<feature type="chain" id="PRO_0000042203" description="Complement C1s subcomponent heavy chain" evidence="1">
    <location>
        <begin position="16"/>
        <end position="437"/>
    </location>
</feature>
<feature type="chain" id="PRO_0000042204" description="Complement C1s subcomponent light chain" evidence="1">
    <location>
        <begin position="438"/>
        <end position="688"/>
    </location>
</feature>
<feature type="domain" description="CUB 1" evidence="3">
    <location>
        <begin position="16"/>
        <end position="130"/>
    </location>
</feature>
<feature type="domain" description="EGF-like; calcium-binding" evidence="2">
    <location>
        <begin position="131"/>
        <end position="172"/>
    </location>
</feature>
<feature type="domain" description="CUB 2" evidence="3">
    <location>
        <begin position="175"/>
        <end position="290"/>
    </location>
</feature>
<feature type="domain" description="Sushi 1" evidence="5">
    <location>
        <begin position="292"/>
        <end position="356"/>
    </location>
</feature>
<feature type="domain" description="Sushi 2" evidence="5">
    <location>
        <begin position="357"/>
        <end position="423"/>
    </location>
</feature>
<feature type="domain" description="Peptidase S1" evidence="4">
    <location>
        <begin position="438"/>
        <end position="680"/>
    </location>
</feature>
<feature type="active site" description="Charge relay system" evidence="1">
    <location>
        <position position="475"/>
    </location>
</feature>
<feature type="active site" description="Charge relay system" evidence="1">
    <location>
        <position position="529"/>
    </location>
</feature>
<feature type="active site" description="Charge relay system" evidence="1">
    <location>
        <position position="631"/>
    </location>
</feature>
<feature type="binding site" evidence="1">
    <location>
        <position position="60"/>
    </location>
    <ligand>
        <name>Ca(2+)</name>
        <dbReference type="ChEBI" id="CHEBI:29108"/>
        <label>1</label>
    </ligand>
</feature>
<feature type="binding site" evidence="1">
    <location>
        <position position="68"/>
    </location>
    <ligand>
        <name>Ca(2+)</name>
        <dbReference type="ChEBI" id="CHEBI:29108"/>
        <label>1</label>
    </ligand>
</feature>
<feature type="binding site" evidence="1">
    <location>
        <position position="113"/>
    </location>
    <ligand>
        <name>Ca(2+)</name>
        <dbReference type="ChEBI" id="CHEBI:29108"/>
        <label>1</label>
    </ligand>
</feature>
<feature type="binding site" evidence="1">
    <location>
        <position position="131"/>
    </location>
    <ligand>
        <name>Ca(2+)</name>
        <dbReference type="ChEBI" id="CHEBI:29108"/>
        <label>2</label>
    </ligand>
</feature>
<feature type="binding site" evidence="1">
    <location>
        <position position="132"/>
    </location>
    <ligand>
        <name>Ca(2+)</name>
        <dbReference type="ChEBI" id="CHEBI:29108"/>
        <label>2</label>
    </ligand>
</feature>
<feature type="binding site" evidence="1">
    <location>
        <position position="134"/>
    </location>
    <ligand>
        <name>Ca(2+)</name>
        <dbReference type="ChEBI" id="CHEBI:29108"/>
        <label>2</label>
    </ligand>
</feature>
<feature type="binding site" evidence="1">
    <location>
        <position position="149"/>
    </location>
    <ligand>
        <name>Ca(2+)</name>
        <dbReference type="ChEBI" id="CHEBI:29108"/>
        <label>2</label>
    </ligand>
</feature>
<feature type="binding site" evidence="1">
    <location>
        <position position="150"/>
    </location>
    <ligand>
        <name>Ca(2+)</name>
        <dbReference type="ChEBI" id="CHEBI:29108"/>
        <label>2</label>
    </ligand>
</feature>
<feature type="binding site" evidence="1">
    <location>
        <position position="153"/>
    </location>
    <ligand>
        <name>Ca(2+)</name>
        <dbReference type="ChEBI" id="CHEBI:29108"/>
        <label>2</label>
    </ligand>
</feature>
<feature type="binding site" evidence="1">
    <location>
        <position position="226"/>
    </location>
    <ligand>
        <name>Ca(2+)</name>
        <dbReference type="ChEBI" id="CHEBI:29108"/>
        <label>3</label>
    </ligand>
</feature>
<feature type="binding site" evidence="1">
    <location>
        <position position="236"/>
    </location>
    <ligand>
        <name>Ca(2+)</name>
        <dbReference type="ChEBI" id="CHEBI:29108"/>
        <label>3</label>
    </ligand>
</feature>
<feature type="binding site" evidence="1">
    <location>
        <position position="275"/>
    </location>
    <ligand>
        <name>Ca(2+)</name>
        <dbReference type="ChEBI" id="CHEBI:29108"/>
        <label>3</label>
    </ligand>
</feature>
<feature type="binding site" evidence="1">
    <location>
        <position position="278"/>
    </location>
    <ligand>
        <name>Ca(2+)</name>
        <dbReference type="ChEBI" id="CHEBI:29108"/>
        <label>3</label>
    </ligand>
</feature>
<feature type="binding site" evidence="1">
    <location>
        <position position="279"/>
    </location>
    <ligand>
        <name>Ca(2+)</name>
        <dbReference type="ChEBI" id="CHEBI:29108"/>
        <label>3</label>
    </ligand>
</feature>
<feature type="site" description="Cleavage; by C1R" evidence="1">
    <location>
        <begin position="437"/>
        <end position="438"/>
    </location>
</feature>
<feature type="modified residue" description="(3R)-3-hydroxyasparagine" evidence="1">
    <location>
        <position position="149"/>
    </location>
</feature>
<feature type="glycosylation site" description="N-linked (GlcNAc...) asparagine" evidence="2">
    <location>
        <position position="174"/>
    </location>
</feature>
<feature type="glycosylation site" description="N-linked (GlcNAc...) asparagine" evidence="2">
    <location>
        <position position="406"/>
    </location>
</feature>
<feature type="disulfide bond" evidence="1">
    <location>
        <begin position="65"/>
        <end position="83"/>
    </location>
</feature>
<feature type="disulfide bond" evidence="1">
    <location>
        <begin position="135"/>
        <end position="147"/>
    </location>
</feature>
<feature type="disulfide bond" evidence="1">
    <location>
        <begin position="143"/>
        <end position="156"/>
    </location>
</feature>
<feature type="disulfide bond" evidence="1">
    <location>
        <begin position="158"/>
        <end position="171"/>
    </location>
</feature>
<feature type="disulfide bond" evidence="1">
    <location>
        <begin position="175"/>
        <end position="202"/>
    </location>
</feature>
<feature type="disulfide bond" evidence="1">
    <location>
        <begin position="234"/>
        <end position="251"/>
    </location>
</feature>
<feature type="disulfide bond" evidence="1">
    <location>
        <begin position="294"/>
        <end position="341"/>
    </location>
</feature>
<feature type="disulfide bond" evidence="1">
    <location>
        <begin position="321"/>
        <end position="354"/>
    </location>
</feature>
<feature type="disulfide bond" evidence="1">
    <location>
        <begin position="359"/>
        <end position="403"/>
    </location>
</feature>
<feature type="disulfide bond" evidence="1">
    <location>
        <begin position="386"/>
        <end position="421"/>
    </location>
</feature>
<feature type="disulfide bond" description="Interchain (between heavy and light chains)" evidence="3 4 5">
    <location>
        <begin position="425"/>
        <end position="549"/>
    </location>
</feature>
<feature type="disulfide bond" evidence="1">
    <location>
        <begin position="595"/>
        <end position="618"/>
    </location>
</feature>
<feature type="disulfide bond" evidence="1">
    <location>
        <begin position="627"/>
        <end position="659"/>
    </location>
</feature>
<feature type="sequence conflict" description="In Ref. 1; BAA25797." evidence="7" ref="1">
    <original>T</original>
    <variation>S</variation>
    <location>
        <position position="87"/>
    </location>
</feature>
<feature type="sequence conflict" description="In Ref. 1; BAA25797." evidence="7" ref="1">
    <original>S</original>
    <variation>F</variation>
    <location>
        <position position="554"/>
    </location>
</feature>
<feature type="sequence conflict" description="In Ref. 1; BAA25797." evidence="7" ref="1">
    <original>G</original>
    <variation>V</variation>
    <location>
        <position position="562"/>
    </location>
</feature>
<feature type="sequence conflict" description="In Ref. 1; BAA25797." evidence="7" ref="1">
    <original>N</original>
    <variation>I</variation>
    <location>
        <position position="575"/>
    </location>
</feature>
<accession>Q6P6T1</accession>
<accession>O70542</accession>
<accession>Q8R099</accession>
<gene>
    <name evidence="6 8" type="primary">C1s</name>
    <name evidence="6" type="synonym">r-gsp</name>
</gene>
<evidence type="ECO:0000250" key="1">
    <source>
        <dbReference type="UniProtKB" id="P09871"/>
    </source>
</evidence>
<evidence type="ECO:0000255" key="2"/>
<evidence type="ECO:0000255" key="3">
    <source>
        <dbReference type="PROSITE-ProRule" id="PRU00059"/>
    </source>
</evidence>
<evidence type="ECO:0000255" key="4">
    <source>
        <dbReference type="PROSITE-ProRule" id="PRU00274"/>
    </source>
</evidence>
<evidence type="ECO:0000255" key="5">
    <source>
        <dbReference type="PROSITE-ProRule" id="PRU00302"/>
    </source>
</evidence>
<evidence type="ECO:0000303" key="6">
    <source>
    </source>
</evidence>
<evidence type="ECO:0000305" key="7"/>
<evidence type="ECO:0000312" key="8">
    <source>
        <dbReference type="RGD" id="619983"/>
    </source>
</evidence>
<reference key="1">
    <citation type="journal article" date="1998" name="Gene">
        <title>Molecular cloning of a cDNA encoding a serine protease homologous to complement Cls precursor from rat C6 glial cells and its expression during glial differentiation.</title>
        <authorList>
            <person name="Sakai H."/>
            <person name="Nakashima S."/>
            <person name="Yoshimura S."/>
            <person name="Nishimura Y."/>
            <person name="Sakai N."/>
            <person name="Nozawa Y."/>
        </authorList>
    </citation>
    <scope>NUCLEOTIDE SEQUENCE [MRNA]</scope>
</reference>
<reference key="2">
    <citation type="journal article" date="2004" name="Genome Res.">
        <title>The status, quality, and expansion of the NIH full-length cDNA project: the Mammalian Gene Collection (MGC).</title>
        <authorList>
            <consortium name="The MGC Project Team"/>
        </authorList>
    </citation>
    <scope>NUCLEOTIDE SEQUENCE [LARGE SCALE MRNA]</scope>
    <source>
        <tissue>Prostate</tissue>
    </source>
</reference>
<proteinExistence type="evidence at transcript level"/>
<keyword id="KW-0106">Calcium</keyword>
<keyword id="KW-0180">Complement pathway</keyword>
<keyword id="KW-1015">Disulfide bond</keyword>
<keyword id="KW-0245">EGF-like domain</keyword>
<keyword id="KW-0325">Glycoprotein</keyword>
<keyword id="KW-0378">Hydrolase</keyword>
<keyword id="KW-0379">Hydroxylation</keyword>
<keyword id="KW-0391">Immunity</keyword>
<keyword id="KW-0399">Innate immunity</keyword>
<keyword id="KW-0479">Metal-binding</keyword>
<keyword id="KW-0645">Protease</keyword>
<keyword id="KW-1185">Reference proteome</keyword>
<keyword id="KW-0677">Repeat</keyword>
<keyword id="KW-0964">Secreted</keyword>
<keyword id="KW-0720">Serine protease</keyword>
<keyword id="KW-0732">Signal</keyword>
<keyword id="KW-0768">Sushi</keyword>